<reference key="1">
    <citation type="journal article" date="2007" name="PLoS ONE">
        <title>A glimpse of streptococcal toxic shock syndrome from comparative genomics of S. suis 2 Chinese isolates.</title>
        <authorList>
            <person name="Chen C."/>
            <person name="Tang J."/>
            <person name="Dong W."/>
            <person name="Wang C."/>
            <person name="Feng Y."/>
            <person name="Wang J."/>
            <person name="Zheng F."/>
            <person name="Pan X."/>
            <person name="Liu D."/>
            <person name="Li M."/>
            <person name="Song Y."/>
            <person name="Zhu X."/>
            <person name="Sun H."/>
            <person name="Feng T."/>
            <person name="Guo Z."/>
            <person name="Ju A."/>
            <person name="Ge J."/>
            <person name="Dong Y."/>
            <person name="Sun W."/>
            <person name="Jiang Y."/>
            <person name="Wang J."/>
            <person name="Yan J."/>
            <person name="Yang H."/>
            <person name="Wang X."/>
            <person name="Gao G.F."/>
            <person name="Yang R."/>
            <person name="Wang J."/>
            <person name="Yu J."/>
        </authorList>
    </citation>
    <scope>NUCLEOTIDE SEQUENCE [LARGE SCALE GENOMIC DNA]</scope>
    <source>
        <strain>05ZYH33</strain>
    </source>
</reference>
<sequence length="232" mass="23891">MTAQKMTAQEIIAFIGNAVKKTTVKVTFEGELAGAVPAEVTKLGNVLFGDWKDVEPLLANLTENVDYVVEQDGRNSAVPLLDKRNINARIEPGAIIRDQVTIGDNAVIMMGAVINIGAEIGPGTMIDMGAILGGRATVGKNSHIGAGAVLAGVIEPASAEPVRVGDNVLVGANAVVIEGVQIGSGSVVAAGAIVTQDVPENVVVAGVPARIIKEIDAQTQQKTALEEALRTL</sequence>
<name>DAPH_STRSY</name>
<organism>
    <name type="scientific">Streptococcus suis (strain 05ZYH33)</name>
    <dbReference type="NCBI Taxonomy" id="391295"/>
    <lineage>
        <taxon>Bacteria</taxon>
        <taxon>Bacillati</taxon>
        <taxon>Bacillota</taxon>
        <taxon>Bacilli</taxon>
        <taxon>Lactobacillales</taxon>
        <taxon>Streptococcaceae</taxon>
        <taxon>Streptococcus</taxon>
    </lineage>
</organism>
<proteinExistence type="inferred from homology"/>
<comment type="function">
    <text evidence="1">Catalyzes the transfer of an acetyl group from acetyl-CoA to tetrahydrodipicolinate.</text>
</comment>
<comment type="catalytic activity">
    <reaction>
        <text>(S)-2,3,4,5-tetrahydrodipicolinate + acetyl-CoA + H2O = L-2-acetamido-6-oxoheptanedioate + CoA</text>
        <dbReference type="Rhea" id="RHEA:13085"/>
        <dbReference type="ChEBI" id="CHEBI:15377"/>
        <dbReference type="ChEBI" id="CHEBI:16845"/>
        <dbReference type="ChEBI" id="CHEBI:57287"/>
        <dbReference type="ChEBI" id="CHEBI:57288"/>
        <dbReference type="ChEBI" id="CHEBI:58117"/>
        <dbReference type="EC" id="2.3.1.89"/>
    </reaction>
</comment>
<comment type="pathway">
    <text>Amino-acid biosynthesis; L-lysine biosynthesis via DAP pathway; LL-2,6-diaminopimelate from (S)-tetrahydrodipicolinate (acetylase route): step 1/3.</text>
</comment>
<comment type="similarity">
    <text evidence="2">Belongs to the transferase hexapeptide repeat family. DapH subfamily.</text>
</comment>
<comment type="sequence caution" evidence="2">
    <conflict type="frameshift">
        <sequence resource="EMBL-CDS" id="ABP91011"/>
    </conflict>
</comment>
<comment type="sequence caution" evidence="2">
    <conflict type="frameshift">
        <sequence resource="EMBL-CDS" id="ABP91012"/>
    </conflict>
</comment>
<accession>A4VY24</accession>
<accession>A4VY22</accession>
<protein>
    <recommendedName>
        <fullName>2,3,4,5-tetrahydropyridine-2,6-dicarboxylate N-acetyltransferase</fullName>
        <ecNumber>2.3.1.89</ecNumber>
    </recommendedName>
    <alternativeName>
        <fullName>Tetrahydrodipicolinate N-acetyltransferase</fullName>
        <shortName>THP acetyltransferase</shortName>
        <shortName>Tetrahydropicolinate acetylase</shortName>
    </alternativeName>
</protein>
<evidence type="ECO:0000250" key="1"/>
<evidence type="ECO:0000305" key="2"/>
<keyword id="KW-0012">Acyltransferase</keyword>
<keyword id="KW-0028">Amino-acid biosynthesis</keyword>
<keyword id="KW-0220">Diaminopimelate biosynthesis</keyword>
<keyword id="KW-0457">Lysine biosynthesis</keyword>
<keyword id="KW-0677">Repeat</keyword>
<keyword id="KW-0808">Transferase</keyword>
<feature type="chain" id="PRO_0000376717" description="2,3,4,5-tetrahydropyridine-2,6-dicarboxylate N-acetyltransferase">
    <location>
        <begin position="1"/>
        <end position="232"/>
    </location>
</feature>
<dbReference type="EC" id="2.3.1.89"/>
<dbReference type="EMBL" id="CP000407">
    <property type="protein sequence ID" value="ABP91012.1"/>
    <property type="status" value="ALT_FRAME"/>
    <property type="molecule type" value="Genomic_DNA"/>
</dbReference>
<dbReference type="EMBL" id="CP000407">
    <property type="protein sequence ID" value="ABP91011.1"/>
    <property type="status" value="ALT_FRAME"/>
    <property type="molecule type" value="Genomic_DNA"/>
</dbReference>
<dbReference type="SMR" id="A4VY24"/>
<dbReference type="STRING" id="391295.SSU05_2047"/>
<dbReference type="KEGG" id="ssu:SSU05_2046"/>
<dbReference type="KEGG" id="ssu:SSU05_2047"/>
<dbReference type="eggNOG" id="COG2171">
    <property type="taxonomic scope" value="Bacteria"/>
</dbReference>
<dbReference type="HOGENOM" id="CLU_2193712_0_0_9"/>
<dbReference type="UniPathway" id="UPA00034">
    <property type="reaction ID" value="UER00022"/>
</dbReference>
<dbReference type="GO" id="GO:0047200">
    <property type="term" value="F:tetrahydrodipicolinate N-acetyltransferase activity"/>
    <property type="evidence" value="ECO:0007669"/>
    <property type="project" value="UniProtKB-EC"/>
</dbReference>
<dbReference type="GO" id="GO:0019877">
    <property type="term" value="P:diaminopimelate biosynthetic process"/>
    <property type="evidence" value="ECO:0007669"/>
    <property type="project" value="UniProtKB-UniRule"/>
</dbReference>
<dbReference type="GO" id="GO:0009089">
    <property type="term" value="P:lysine biosynthetic process via diaminopimelate"/>
    <property type="evidence" value="ECO:0007669"/>
    <property type="project" value="UniProtKB-UniRule"/>
</dbReference>
<dbReference type="Gene3D" id="2.160.10.10">
    <property type="entry name" value="Hexapeptide repeat proteins"/>
    <property type="match status" value="1"/>
</dbReference>
<dbReference type="Gene3D" id="3.30.70.250">
    <property type="entry name" value="Malonyl-CoA ACP transacylase, ACP-binding"/>
    <property type="match status" value="1"/>
</dbReference>
<dbReference type="HAMAP" id="MF_01691">
    <property type="entry name" value="DapH"/>
    <property type="match status" value="1"/>
</dbReference>
<dbReference type="InterPro" id="IPR019873">
    <property type="entry name" value="DapH"/>
</dbReference>
<dbReference type="InterPro" id="IPR013710">
    <property type="entry name" value="DapH_N"/>
</dbReference>
<dbReference type="InterPro" id="IPR001451">
    <property type="entry name" value="Hexapep"/>
</dbReference>
<dbReference type="InterPro" id="IPR018357">
    <property type="entry name" value="Hexapep_transf_CS"/>
</dbReference>
<dbReference type="InterPro" id="IPR050179">
    <property type="entry name" value="Trans_hexapeptide_repeat"/>
</dbReference>
<dbReference type="InterPro" id="IPR011004">
    <property type="entry name" value="Trimer_LpxA-like_sf"/>
</dbReference>
<dbReference type="NCBIfam" id="TIGR03532">
    <property type="entry name" value="DapD_Ac"/>
    <property type="match status" value="1"/>
</dbReference>
<dbReference type="PANTHER" id="PTHR43300:SF10">
    <property type="entry name" value="2,3,4,5-TETRAHYDROPYRIDINE-2,6-DICARBOXYLATE N-ACETYLTRANSFERASE"/>
    <property type="match status" value="1"/>
</dbReference>
<dbReference type="PANTHER" id="PTHR43300">
    <property type="entry name" value="ACETYLTRANSFERASE"/>
    <property type="match status" value="1"/>
</dbReference>
<dbReference type="Pfam" id="PF08503">
    <property type="entry name" value="DapH_N"/>
    <property type="match status" value="1"/>
</dbReference>
<dbReference type="Pfam" id="PF00132">
    <property type="entry name" value="Hexapep"/>
    <property type="match status" value="1"/>
</dbReference>
<dbReference type="Pfam" id="PF14602">
    <property type="entry name" value="Hexapep_2"/>
    <property type="match status" value="2"/>
</dbReference>
<dbReference type="SUPFAM" id="SSF51161">
    <property type="entry name" value="Trimeric LpxA-like enzymes"/>
    <property type="match status" value="1"/>
</dbReference>
<dbReference type="PROSITE" id="PS00101">
    <property type="entry name" value="HEXAPEP_TRANSFERASES"/>
    <property type="match status" value="2"/>
</dbReference>
<gene>
    <name type="primary">dapH</name>
    <name type="ordered locus">SSU05_2046/SSU05_2047</name>
</gene>